<feature type="chain" id="PRO_0000132359" description="Small ribosomal subunit protein uS4">
    <location>
        <begin position="1"/>
        <end position="207"/>
    </location>
</feature>
<feature type="domain" description="S4 RNA-binding" evidence="1">
    <location>
        <begin position="96"/>
        <end position="156"/>
    </location>
</feature>
<comment type="function">
    <text evidence="1">One of the primary rRNA binding proteins, it binds directly to 16S rRNA where it nucleates assembly of the body of the 30S subunit.</text>
</comment>
<comment type="function">
    <text evidence="1">With S5 and S12 plays an important role in translational accuracy.</text>
</comment>
<comment type="subunit">
    <text evidence="1">Part of the 30S ribosomal subunit. Contacts protein S5. The interaction surface between S4 and S5 is involved in control of translational fidelity.</text>
</comment>
<comment type="similarity">
    <text evidence="1">Belongs to the universal ribosomal protein uS4 family.</text>
</comment>
<keyword id="KW-1185">Reference proteome</keyword>
<keyword id="KW-0687">Ribonucleoprotein</keyword>
<keyword id="KW-0689">Ribosomal protein</keyword>
<keyword id="KW-0694">RNA-binding</keyword>
<keyword id="KW-0699">rRNA-binding</keyword>
<proteinExistence type="inferred from homology"/>
<protein>
    <recommendedName>
        <fullName evidence="1">Small ribosomal subunit protein uS4</fullName>
    </recommendedName>
    <alternativeName>
        <fullName evidence="2">30S ribosomal protein S4</fullName>
    </alternativeName>
</protein>
<gene>
    <name evidence="1" type="primary">rpsD</name>
    <name type="ordered locus">Bfl215</name>
</gene>
<reference key="1">
    <citation type="journal article" date="2003" name="Proc. Natl. Acad. Sci. U.S.A.">
        <title>The genome sequence of Blochmannia floridanus: comparative analysis of reduced genomes.</title>
        <authorList>
            <person name="Gil R."/>
            <person name="Silva F.J."/>
            <person name="Zientz E."/>
            <person name="Delmotte F."/>
            <person name="Gonzalez-Candelas F."/>
            <person name="Latorre A."/>
            <person name="Rausell C."/>
            <person name="Kamerbeek J."/>
            <person name="Gadau J."/>
            <person name="Hoelldobler B."/>
            <person name="van Ham R.C.H.J."/>
            <person name="Gross R."/>
            <person name="Moya A."/>
        </authorList>
    </citation>
    <scope>NUCLEOTIDE SEQUENCE [LARGE SCALE GENOMIC DNA]</scope>
</reference>
<name>RS4_BLOFL</name>
<sequence>MAKYVGPKLKLSRRENTDLFLKSGIRSIDSKCQFDHAPGQHSIRKSRLSDYGVQLREKQKVKRMYGILENQFANYYRKSASMKGNTGEILLQLLESRLDNVVYRMGFGSTRAESRQLVSHKSIIVNDCIVNIASYQVVPNTVIQVYKKSHNQSRIYAALEIAEQQRESVPWIEVDSAKLKGIFKRRPERSELSANINEHLIVELYSK</sequence>
<dbReference type="EMBL" id="BX248583">
    <property type="protein sequence ID" value="CAD83730.1"/>
    <property type="molecule type" value="Genomic_DNA"/>
</dbReference>
<dbReference type="SMR" id="Q7VQC4"/>
<dbReference type="STRING" id="203907.Bfl215"/>
<dbReference type="KEGG" id="bfl:Bfl215"/>
<dbReference type="eggNOG" id="COG0522">
    <property type="taxonomic scope" value="Bacteria"/>
</dbReference>
<dbReference type="HOGENOM" id="CLU_092403_0_2_6"/>
<dbReference type="OrthoDB" id="9803672at2"/>
<dbReference type="Proteomes" id="UP000002192">
    <property type="component" value="Chromosome"/>
</dbReference>
<dbReference type="GO" id="GO:0015935">
    <property type="term" value="C:small ribosomal subunit"/>
    <property type="evidence" value="ECO:0007669"/>
    <property type="project" value="InterPro"/>
</dbReference>
<dbReference type="GO" id="GO:0019843">
    <property type="term" value="F:rRNA binding"/>
    <property type="evidence" value="ECO:0007669"/>
    <property type="project" value="UniProtKB-UniRule"/>
</dbReference>
<dbReference type="GO" id="GO:0003735">
    <property type="term" value="F:structural constituent of ribosome"/>
    <property type="evidence" value="ECO:0007669"/>
    <property type="project" value="InterPro"/>
</dbReference>
<dbReference type="GO" id="GO:0042274">
    <property type="term" value="P:ribosomal small subunit biogenesis"/>
    <property type="evidence" value="ECO:0007669"/>
    <property type="project" value="TreeGrafter"/>
</dbReference>
<dbReference type="GO" id="GO:0006412">
    <property type="term" value="P:translation"/>
    <property type="evidence" value="ECO:0007669"/>
    <property type="project" value="UniProtKB-UniRule"/>
</dbReference>
<dbReference type="CDD" id="cd00165">
    <property type="entry name" value="S4"/>
    <property type="match status" value="1"/>
</dbReference>
<dbReference type="FunFam" id="1.10.1050.10:FF:000001">
    <property type="entry name" value="30S ribosomal protein S4"/>
    <property type="match status" value="1"/>
</dbReference>
<dbReference type="FunFam" id="3.10.290.10:FF:000001">
    <property type="entry name" value="30S ribosomal protein S4"/>
    <property type="match status" value="1"/>
</dbReference>
<dbReference type="Gene3D" id="1.10.1050.10">
    <property type="entry name" value="Ribosomal Protein S4 Delta 41, Chain A, domain 1"/>
    <property type="match status" value="1"/>
</dbReference>
<dbReference type="Gene3D" id="3.10.290.10">
    <property type="entry name" value="RNA-binding S4 domain"/>
    <property type="match status" value="1"/>
</dbReference>
<dbReference type="HAMAP" id="MF_01306_B">
    <property type="entry name" value="Ribosomal_uS4_B"/>
    <property type="match status" value="1"/>
</dbReference>
<dbReference type="InterPro" id="IPR022801">
    <property type="entry name" value="Ribosomal_uS4"/>
</dbReference>
<dbReference type="InterPro" id="IPR005709">
    <property type="entry name" value="Ribosomal_uS4_bac-type"/>
</dbReference>
<dbReference type="InterPro" id="IPR018079">
    <property type="entry name" value="Ribosomal_uS4_CS"/>
</dbReference>
<dbReference type="InterPro" id="IPR001912">
    <property type="entry name" value="Ribosomal_uS4_N"/>
</dbReference>
<dbReference type="InterPro" id="IPR002942">
    <property type="entry name" value="S4_RNA-bd"/>
</dbReference>
<dbReference type="InterPro" id="IPR036986">
    <property type="entry name" value="S4_RNA-bd_sf"/>
</dbReference>
<dbReference type="NCBIfam" id="NF003717">
    <property type="entry name" value="PRK05327.1"/>
    <property type="match status" value="1"/>
</dbReference>
<dbReference type="NCBIfam" id="TIGR01017">
    <property type="entry name" value="rpsD_bact"/>
    <property type="match status" value="1"/>
</dbReference>
<dbReference type="PANTHER" id="PTHR11831">
    <property type="entry name" value="30S 40S RIBOSOMAL PROTEIN"/>
    <property type="match status" value="1"/>
</dbReference>
<dbReference type="PANTHER" id="PTHR11831:SF4">
    <property type="entry name" value="SMALL RIBOSOMAL SUBUNIT PROTEIN US4M"/>
    <property type="match status" value="1"/>
</dbReference>
<dbReference type="Pfam" id="PF00163">
    <property type="entry name" value="Ribosomal_S4"/>
    <property type="match status" value="1"/>
</dbReference>
<dbReference type="Pfam" id="PF01479">
    <property type="entry name" value="S4"/>
    <property type="match status" value="1"/>
</dbReference>
<dbReference type="SMART" id="SM01390">
    <property type="entry name" value="Ribosomal_S4"/>
    <property type="match status" value="1"/>
</dbReference>
<dbReference type="SMART" id="SM00363">
    <property type="entry name" value="S4"/>
    <property type="match status" value="1"/>
</dbReference>
<dbReference type="SUPFAM" id="SSF55174">
    <property type="entry name" value="Alpha-L RNA-binding motif"/>
    <property type="match status" value="1"/>
</dbReference>
<dbReference type="PROSITE" id="PS00632">
    <property type="entry name" value="RIBOSOMAL_S4"/>
    <property type="match status" value="1"/>
</dbReference>
<dbReference type="PROSITE" id="PS50889">
    <property type="entry name" value="S4"/>
    <property type="match status" value="1"/>
</dbReference>
<evidence type="ECO:0000255" key="1">
    <source>
        <dbReference type="HAMAP-Rule" id="MF_01306"/>
    </source>
</evidence>
<evidence type="ECO:0000305" key="2"/>
<organism>
    <name type="scientific">Blochmanniella floridana</name>
    <dbReference type="NCBI Taxonomy" id="203907"/>
    <lineage>
        <taxon>Bacteria</taxon>
        <taxon>Pseudomonadati</taxon>
        <taxon>Pseudomonadota</taxon>
        <taxon>Gammaproteobacteria</taxon>
        <taxon>Enterobacterales</taxon>
        <taxon>Enterobacteriaceae</taxon>
        <taxon>ant endosymbionts</taxon>
        <taxon>Candidatus Blochmanniella</taxon>
    </lineage>
</organism>
<accession>Q7VQC4</accession>